<accession>B2FPR2</accession>
<comment type="function">
    <text evidence="1">Specifically methylates the pseudouridine at position 1915 (m3Psi1915) in 23S rRNA.</text>
</comment>
<comment type="catalytic activity">
    <reaction evidence="1">
        <text>pseudouridine(1915) in 23S rRNA + S-adenosyl-L-methionine = N(3)-methylpseudouridine(1915) in 23S rRNA + S-adenosyl-L-homocysteine + H(+)</text>
        <dbReference type="Rhea" id="RHEA:42752"/>
        <dbReference type="Rhea" id="RHEA-COMP:10221"/>
        <dbReference type="Rhea" id="RHEA-COMP:10222"/>
        <dbReference type="ChEBI" id="CHEBI:15378"/>
        <dbReference type="ChEBI" id="CHEBI:57856"/>
        <dbReference type="ChEBI" id="CHEBI:59789"/>
        <dbReference type="ChEBI" id="CHEBI:65314"/>
        <dbReference type="ChEBI" id="CHEBI:74486"/>
        <dbReference type="EC" id="2.1.1.177"/>
    </reaction>
</comment>
<comment type="subunit">
    <text evidence="1">Homodimer.</text>
</comment>
<comment type="subcellular location">
    <subcellularLocation>
        <location evidence="1">Cytoplasm</location>
    </subcellularLocation>
</comment>
<comment type="similarity">
    <text evidence="1">Belongs to the RNA methyltransferase RlmH family.</text>
</comment>
<organism>
    <name type="scientific">Stenotrophomonas maltophilia (strain K279a)</name>
    <dbReference type="NCBI Taxonomy" id="522373"/>
    <lineage>
        <taxon>Bacteria</taxon>
        <taxon>Pseudomonadati</taxon>
        <taxon>Pseudomonadota</taxon>
        <taxon>Gammaproteobacteria</taxon>
        <taxon>Lysobacterales</taxon>
        <taxon>Lysobacteraceae</taxon>
        <taxon>Stenotrophomonas</taxon>
        <taxon>Stenotrophomonas maltophilia group</taxon>
    </lineage>
</organism>
<proteinExistence type="inferred from homology"/>
<gene>
    <name evidence="1" type="primary">rlmH</name>
    <name type="ordered locus">Smlt3480</name>
</gene>
<sequence>MKARLIATGERAPSWVAQGFAEYQKRLSHWLPFELVEIEPGLRGKGRDARRATEDEGRRVIAALPKNAYVVALDVPGRQLSSEQLAQRLEHWRGQGRDLAFLIGGPEGHSPEVSALADEKWSIGPLTLPHMLVRLVVAEQLYRAAAMIANHPYHRA</sequence>
<feature type="chain" id="PRO_0000366658" description="Ribosomal RNA large subunit methyltransferase H">
    <location>
        <begin position="1"/>
        <end position="156"/>
    </location>
</feature>
<feature type="binding site" evidence="1">
    <location>
        <position position="73"/>
    </location>
    <ligand>
        <name>S-adenosyl-L-methionine</name>
        <dbReference type="ChEBI" id="CHEBI:59789"/>
    </ligand>
</feature>
<feature type="binding site" evidence="1">
    <location>
        <position position="104"/>
    </location>
    <ligand>
        <name>S-adenosyl-L-methionine</name>
        <dbReference type="ChEBI" id="CHEBI:59789"/>
    </ligand>
</feature>
<feature type="binding site" evidence="1">
    <location>
        <begin position="123"/>
        <end position="128"/>
    </location>
    <ligand>
        <name>S-adenosyl-L-methionine</name>
        <dbReference type="ChEBI" id="CHEBI:59789"/>
    </ligand>
</feature>
<reference key="1">
    <citation type="journal article" date="2008" name="Genome Biol.">
        <title>The complete genome, comparative and functional analysis of Stenotrophomonas maltophilia reveals an organism heavily shielded by drug resistance determinants.</title>
        <authorList>
            <person name="Crossman L.C."/>
            <person name="Gould V.C."/>
            <person name="Dow J.M."/>
            <person name="Vernikos G.S."/>
            <person name="Okazaki A."/>
            <person name="Sebaihia M."/>
            <person name="Saunders D."/>
            <person name="Arrowsmith C."/>
            <person name="Carver T."/>
            <person name="Peters N."/>
            <person name="Adlem E."/>
            <person name="Kerhornou A."/>
            <person name="Lord A."/>
            <person name="Murphy L."/>
            <person name="Seeger K."/>
            <person name="Squares R."/>
            <person name="Rutter S."/>
            <person name="Quail M.A."/>
            <person name="Rajandream M.A."/>
            <person name="Harris D."/>
            <person name="Churcher C."/>
            <person name="Bentley S.D."/>
            <person name="Parkhill J."/>
            <person name="Thomson N.R."/>
            <person name="Avison M.B."/>
        </authorList>
    </citation>
    <scope>NUCLEOTIDE SEQUENCE [LARGE SCALE GENOMIC DNA]</scope>
    <source>
        <strain>K279a</strain>
    </source>
</reference>
<dbReference type="EC" id="2.1.1.177" evidence="1"/>
<dbReference type="EMBL" id="AM743169">
    <property type="protein sequence ID" value="CAQ46903.1"/>
    <property type="molecule type" value="Genomic_DNA"/>
</dbReference>
<dbReference type="RefSeq" id="WP_005410535.1">
    <property type="nucleotide sequence ID" value="NC_010943.1"/>
</dbReference>
<dbReference type="SMR" id="B2FPR2"/>
<dbReference type="EnsemblBacteria" id="CAQ46903">
    <property type="protein sequence ID" value="CAQ46903"/>
    <property type="gene ID" value="Smlt3480"/>
</dbReference>
<dbReference type="KEGG" id="sml:Smlt3480"/>
<dbReference type="eggNOG" id="COG1576">
    <property type="taxonomic scope" value="Bacteria"/>
</dbReference>
<dbReference type="HOGENOM" id="CLU_100552_1_0_6"/>
<dbReference type="Proteomes" id="UP000008840">
    <property type="component" value="Chromosome"/>
</dbReference>
<dbReference type="GO" id="GO:0005737">
    <property type="term" value="C:cytoplasm"/>
    <property type="evidence" value="ECO:0007669"/>
    <property type="project" value="UniProtKB-SubCell"/>
</dbReference>
<dbReference type="GO" id="GO:0070038">
    <property type="term" value="F:rRNA (pseudouridine-N3-)-methyltransferase activity"/>
    <property type="evidence" value="ECO:0007669"/>
    <property type="project" value="UniProtKB-UniRule"/>
</dbReference>
<dbReference type="CDD" id="cd18081">
    <property type="entry name" value="RlmH-like"/>
    <property type="match status" value="1"/>
</dbReference>
<dbReference type="Gene3D" id="3.40.1280.10">
    <property type="match status" value="1"/>
</dbReference>
<dbReference type="HAMAP" id="MF_00658">
    <property type="entry name" value="23SrRNA_methyltr_H"/>
    <property type="match status" value="1"/>
</dbReference>
<dbReference type="InterPro" id="IPR029028">
    <property type="entry name" value="Alpha/beta_knot_MTases"/>
</dbReference>
<dbReference type="InterPro" id="IPR003742">
    <property type="entry name" value="RlmH-like"/>
</dbReference>
<dbReference type="InterPro" id="IPR029026">
    <property type="entry name" value="tRNA_m1G_MTases_N"/>
</dbReference>
<dbReference type="NCBIfam" id="NF000986">
    <property type="entry name" value="PRK00103.1-4"/>
    <property type="match status" value="1"/>
</dbReference>
<dbReference type="NCBIfam" id="TIGR00246">
    <property type="entry name" value="tRNA_RlmH_YbeA"/>
    <property type="match status" value="1"/>
</dbReference>
<dbReference type="PANTHER" id="PTHR33603">
    <property type="entry name" value="METHYLTRANSFERASE"/>
    <property type="match status" value="1"/>
</dbReference>
<dbReference type="PANTHER" id="PTHR33603:SF1">
    <property type="entry name" value="RIBOSOMAL RNA LARGE SUBUNIT METHYLTRANSFERASE H"/>
    <property type="match status" value="1"/>
</dbReference>
<dbReference type="Pfam" id="PF02590">
    <property type="entry name" value="SPOUT_MTase"/>
    <property type="match status" value="1"/>
</dbReference>
<dbReference type="PIRSF" id="PIRSF004505">
    <property type="entry name" value="MT_bac"/>
    <property type="match status" value="1"/>
</dbReference>
<dbReference type="SUPFAM" id="SSF75217">
    <property type="entry name" value="alpha/beta knot"/>
    <property type="match status" value="1"/>
</dbReference>
<name>RLMH_STRMK</name>
<keyword id="KW-0963">Cytoplasm</keyword>
<keyword id="KW-0489">Methyltransferase</keyword>
<keyword id="KW-1185">Reference proteome</keyword>
<keyword id="KW-0698">rRNA processing</keyword>
<keyword id="KW-0949">S-adenosyl-L-methionine</keyword>
<keyword id="KW-0808">Transferase</keyword>
<evidence type="ECO:0000255" key="1">
    <source>
        <dbReference type="HAMAP-Rule" id="MF_00658"/>
    </source>
</evidence>
<protein>
    <recommendedName>
        <fullName evidence="1">Ribosomal RNA large subunit methyltransferase H</fullName>
        <ecNumber evidence="1">2.1.1.177</ecNumber>
    </recommendedName>
    <alternativeName>
        <fullName evidence="1">23S rRNA (pseudouridine1915-N3)-methyltransferase</fullName>
    </alternativeName>
    <alternativeName>
        <fullName evidence="1">23S rRNA m3Psi1915 methyltransferase</fullName>
    </alternativeName>
    <alternativeName>
        <fullName evidence="1">rRNA (pseudouridine-N3-)-methyltransferase RlmH</fullName>
    </alternativeName>
</protein>